<proteinExistence type="evidence at protein level"/>
<organism>
    <name type="scientific">Brassica napus</name>
    <name type="common">Rape</name>
    <dbReference type="NCBI Taxonomy" id="3708"/>
    <lineage>
        <taxon>Eukaryota</taxon>
        <taxon>Viridiplantae</taxon>
        <taxon>Streptophyta</taxon>
        <taxon>Embryophyta</taxon>
        <taxon>Tracheophyta</taxon>
        <taxon>Spermatophyta</taxon>
        <taxon>Magnoliopsida</taxon>
        <taxon>eudicotyledons</taxon>
        <taxon>Gunneridae</taxon>
        <taxon>Pentapetalae</taxon>
        <taxon>rosids</taxon>
        <taxon>malvids</taxon>
        <taxon>Brassicales</taxon>
        <taxon>Brassicaceae</taxon>
        <taxon>Brassiceae</taxon>
        <taxon>Brassica</taxon>
    </lineage>
</organism>
<feature type="chain" id="PRO_0000058245" description="20 kDa pollen coat protein">
    <location>
        <begin position="1"/>
        <end position="15" status="greater than"/>
    </location>
</feature>
<feature type="non-terminal residue">
    <location>
        <position position="15"/>
    </location>
</feature>
<reference key="1">
    <citation type="journal article" date="1998" name="Plant J.">
        <title>Biosynthesis, targeting and processing of oleosin-like proteins, which are major pollen coat components in Brassica napus.</title>
        <authorList>
            <person name="Murphy D.J."/>
            <person name="Ross J.H.E."/>
        </authorList>
    </citation>
    <scope>PROTEIN SEQUENCE</scope>
    <source>
        <strain>cv. Topas</strain>
        <tissue>Pollen</tissue>
    </source>
</reference>
<accession>P81096</accession>
<name>PC20_BRANA</name>
<protein>
    <recommendedName>
        <fullName>20 kDa pollen coat protein</fullName>
    </recommendedName>
</protein>
<keyword id="KW-0903">Direct protein sequencing</keyword>
<sequence length="15" mass="1756">APLTNEYLNHLCHKC</sequence>
<comment type="function">
    <text>Major component of the pollen coat.</text>
</comment>
<comment type="tissue specificity">
    <text>Pollen.</text>
</comment>